<sequence length="220" mass="23590">MTQDEMKKAAGWAALKYVERDSIVGVGTGSTVNHFIDALATMKADIEGAVSSSEASTQKMKALGIPVYDLNSVDRLSVYVDGADEINDRMDMIKGGGAALTREKIVAAVAEKFICIVDNTKQVDILGEFPLPVEVIPMARSYVARQLVKLGGDPVYREGVVTDNGNVILDVYNLKILNPKELESQINEIVGVVTNGLFAKRGADVLLVGTPDGVKTFTAE</sequence>
<name>RPIA_SHEB2</name>
<dbReference type="EC" id="5.3.1.6" evidence="1"/>
<dbReference type="EMBL" id="CP001252">
    <property type="protein sequence ID" value="ACK45579.1"/>
    <property type="molecule type" value="Genomic_DNA"/>
</dbReference>
<dbReference type="RefSeq" id="WP_006082772.1">
    <property type="nucleotide sequence ID" value="NC_011663.1"/>
</dbReference>
<dbReference type="SMR" id="B8E4U3"/>
<dbReference type="GeneID" id="11773556"/>
<dbReference type="KEGG" id="sbp:Sbal223_1064"/>
<dbReference type="HOGENOM" id="CLU_056590_1_1_6"/>
<dbReference type="UniPathway" id="UPA00115">
    <property type="reaction ID" value="UER00412"/>
</dbReference>
<dbReference type="Proteomes" id="UP000002507">
    <property type="component" value="Chromosome"/>
</dbReference>
<dbReference type="GO" id="GO:0005829">
    <property type="term" value="C:cytosol"/>
    <property type="evidence" value="ECO:0007669"/>
    <property type="project" value="TreeGrafter"/>
</dbReference>
<dbReference type="GO" id="GO:0004751">
    <property type="term" value="F:ribose-5-phosphate isomerase activity"/>
    <property type="evidence" value="ECO:0007669"/>
    <property type="project" value="UniProtKB-UniRule"/>
</dbReference>
<dbReference type="GO" id="GO:0006014">
    <property type="term" value="P:D-ribose metabolic process"/>
    <property type="evidence" value="ECO:0007669"/>
    <property type="project" value="TreeGrafter"/>
</dbReference>
<dbReference type="GO" id="GO:0009052">
    <property type="term" value="P:pentose-phosphate shunt, non-oxidative branch"/>
    <property type="evidence" value="ECO:0007669"/>
    <property type="project" value="UniProtKB-UniRule"/>
</dbReference>
<dbReference type="CDD" id="cd01398">
    <property type="entry name" value="RPI_A"/>
    <property type="match status" value="1"/>
</dbReference>
<dbReference type="FunFam" id="3.30.70.260:FF:000004">
    <property type="entry name" value="Ribose-5-phosphate isomerase A"/>
    <property type="match status" value="1"/>
</dbReference>
<dbReference type="FunFam" id="3.40.50.1360:FF:000001">
    <property type="entry name" value="Ribose-5-phosphate isomerase A"/>
    <property type="match status" value="1"/>
</dbReference>
<dbReference type="Gene3D" id="3.30.70.260">
    <property type="match status" value="1"/>
</dbReference>
<dbReference type="Gene3D" id="3.40.50.1360">
    <property type="match status" value="1"/>
</dbReference>
<dbReference type="HAMAP" id="MF_00170">
    <property type="entry name" value="Rib_5P_isom_A"/>
    <property type="match status" value="1"/>
</dbReference>
<dbReference type="InterPro" id="IPR037171">
    <property type="entry name" value="NagB/RpiA_transferase-like"/>
</dbReference>
<dbReference type="InterPro" id="IPR020672">
    <property type="entry name" value="Ribose5P_isomerase_typA_subgr"/>
</dbReference>
<dbReference type="InterPro" id="IPR004788">
    <property type="entry name" value="Ribose5P_isomerase_type_A"/>
</dbReference>
<dbReference type="NCBIfam" id="NF001924">
    <property type="entry name" value="PRK00702.1"/>
    <property type="match status" value="1"/>
</dbReference>
<dbReference type="NCBIfam" id="TIGR00021">
    <property type="entry name" value="rpiA"/>
    <property type="match status" value="1"/>
</dbReference>
<dbReference type="PANTHER" id="PTHR11934">
    <property type="entry name" value="RIBOSE-5-PHOSPHATE ISOMERASE"/>
    <property type="match status" value="1"/>
</dbReference>
<dbReference type="PANTHER" id="PTHR11934:SF0">
    <property type="entry name" value="RIBOSE-5-PHOSPHATE ISOMERASE"/>
    <property type="match status" value="1"/>
</dbReference>
<dbReference type="Pfam" id="PF06026">
    <property type="entry name" value="Rib_5-P_isom_A"/>
    <property type="match status" value="1"/>
</dbReference>
<dbReference type="SUPFAM" id="SSF75445">
    <property type="entry name" value="D-ribose-5-phosphate isomerase (RpiA), lid domain"/>
    <property type="match status" value="1"/>
</dbReference>
<dbReference type="SUPFAM" id="SSF100950">
    <property type="entry name" value="NagB/RpiA/CoA transferase-like"/>
    <property type="match status" value="1"/>
</dbReference>
<keyword id="KW-0413">Isomerase</keyword>
<feature type="chain" id="PRO_1000194720" description="Ribose-5-phosphate isomerase A">
    <location>
        <begin position="1"/>
        <end position="220"/>
    </location>
</feature>
<feature type="active site" description="Proton acceptor" evidence="1">
    <location>
        <position position="103"/>
    </location>
</feature>
<feature type="binding site" evidence="1">
    <location>
        <begin position="28"/>
        <end position="31"/>
    </location>
    <ligand>
        <name>substrate</name>
    </ligand>
</feature>
<feature type="binding site" evidence="1">
    <location>
        <begin position="81"/>
        <end position="84"/>
    </location>
    <ligand>
        <name>substrate</name>
    </ligand>
</feature>
<feature type="binding site" evidence="1">
    <location>
        <begin position="94"/>
        <end position="97"/>
    </location>
    <ligand>
        <name>substrate</name>
    </ligand>
</feature>
<feature type="binding site" evidence="1">
    <location>
        <position position="121"/>
    </location>
    <ligand>
        <name>substrate</name>
    </ligand>
</feature>
<gene>
    <name evidence="1" type="primary">rpiA</name>
    <name type="ordered locus">Sbal223_1064</name>
</gene>
<protein>
    <recommendedName>
        <fullName evidence="1">Ribose-5-phosphate isomerase A</fullName>
        <ecNumber evidence="1">5.3.1.6</ecNumber>
    </recommendedName>
    <alternativeName>
        <fullName evidence="1">Phosphoriboisomerase A</fullName>
        <shortName evidence="1">PRI</shortName>
    </alternativeName>
</protein>
<reference key="1">
    <citation type="submission" date="2008-12" db="EMBL/GenBank/DDBJ databases">
        <title>Complete sequence of chromosome of Shewanella baltica OS223.</title>
        <authorList>
            <consortium name="US DOE Joint Genome Institute"/>
            <person name="Lucas S."/>
            <person name="Copeland A."/>
            <person name="Lapidus A."/>
            <person name="Glavina del Rio T."/>
            <person name="Dalin E."/>
            <person name="Tice H."/>
            <person name="Bruce D."/>
            <person name="Goodwin L."/>
            <person name="Pitluck S."/>
            <person name="Chertkov O."/>
            <person name="Meincke L."/>
            <person name="Brettin T."/>
            <person name="Detter J.C."/>
            <person name="Han C."/>
            <person name="Kuske C.R."/>
            <person name="Larimer F."/>
            <person name="Land M."/>
            <person name="Hauser L."/>
            <person name="Kyrpides N."/>
            <person name="Ovchinnikova G."/>
            <person name="Brettar I."/>
            <person name="Rodrigues J."/>
            <person name="Konstantinidis K."/>
            <person name="Tiedje J."/>
        </authorList>
    </citation>
    <scope>NUCLEOTIDE SEQUENCE [LARGE SCALE GENOMIC DNA]</scope>
    <source>
        <strain>OS223</strain>
    </source>
</reference>
<accession>B8E4U3</accession>
<comment type="function">
    <text evidence="1">Catalyzes the reversible conversion of ribose-5-phosphate to ribulose 5-phosphate.</text>
</comment>
<comment type="catalytic activity">
    <reaction evidence="1">
        <text>aldehydo-D-ribose 5-phosphate = D-ribulose 5-phosphate</text>
        <dbReference type="Rhea" id="RHEA:14657"/>
        <dbReference type="ChEBI" id="CHEBI:58121"/>
        <dbReference type="ChEBI" id="CHEBI:58273"/>
        <dbReference type="EC" id="5.3.1.6"/>
    </reaction>
</comment>
<comment type="pathway">
    <text evidence="1">Carbohydrate degradation; pentose phosphate pathway; D-ribose 5-phosphate from D-ribulose 5-phosphate (non-oxidative stage): step 1/1.</text>
</comment>
<comment type="subunit">
    <text evidence="1">Homodimer.</text>
</comment>
<comment type="similarity">
    <text evidence="1">Belongs to the ribose 5-phosphate isomerase family.</text>
</comment>
<proteinExistence type="inferred from homology"/>
<organism>
    <name type="scientific">Shewanella baltica (strain OS223)</name>
    <dbReference type="NCBI Taxonomy" id="407976"/>
    <lineage>
        <taxon>Bacteria</taxon>
        <taxon>Pseudomonadati</taxon>
        <taxon>Pseudomonadota</taxon>
        <taxon>Gammaproteobacteria</taxon>
        <taxon>Alteromonadales</taxon>
        <taxon>Shewanellaceae</taxon>
        <taxon>Shewanella</taxon>
    </lineage>
</organism>
<evidence type="ECO:0000255" key="1">
    <source>
        <dbReference type="HAMAP-Rule" id="MF_00170"/>
    </source>
</evidence>